<reference key="1">
    <citation type="submission" date="2001-11" db="EMBL/GenBank/DDBJ databases">
        <title>The role of chemokines in bovine respiratory syncytial virus infection.</title>
        <authorList>
            <person name="Neuenschwander S."/>
            <person name="Werling D."/>
        </authorList>
    </citation>
    <scope>NUCLEOTIDE SEQUENCE [MRNA]</scope>
</reference>
<gene>
    <name type="primary">CCL20</name>
    <name type="synonym">MIP3A</name>
    <name type="synonym">SCYA20</name>
</gene>
<comment type="function">
    <text evidence="2 3">Acts as a ligand for C-C chemokine receptor CCR6. Signals through binding and activation of CCR6 and induces a strong chemotactic response and mobilization of intracellular calcium ions. The ligand-receptor pair CCL20-CCR6 is responsible for the chemotaxis of dendritic cells (DC), effector/memory T-cells and B-cells and plays an important role at skin and mucosal surfaces under homeostatic and inflammatory conditions, as well as in pathology, including cancer and autoimmune diseases. CCL20 acts as a chemotactic factor that attracts lymphocytes and, slightly, neutrophils, but not monocytes. Involved in the recruitment of both the pro-inflammatory IL17 producing helper T-cells (Th17) and the regulatory T-cells (Treg) to sites of inflammation. Required for optimal migration of thymic natural regulatory T cells (nTregs) and DN1 early thymocyte progenitor cells. Positively regulates sperm motility and chemotaxis via its binding to CCR6 which triggers Ca2+ mobilization in the sperm which is important for its motility. May be involved in formation and function of the mucosal lymphoid tissues by attracting lymphocytes and dendritic cells towards epithelial cells.</text>
</comment>
<comment type="subcellular location">
    <subcellularLocation>
        <location evidence="3">Secreted</location>
    </subcellularLocation>
</comment>
<comment type="similarity">
    <text evidence="4">Belongs to the intercrine beta (chemokine CC) family.</text>
</comment>
<protein>
    <recommendedName>
        <fullName>C-C motif chemokine 20</fullName>
    </recommendedName>
    <alternativeName>
        <fullName>Macrophage inflammatory protein 3 alpha</fullName>
        <shortName>MIP-3-alpha</shortName>
    </alternativeName>
    <alternativeName>
        <fullName>Small-inducible cytokine A20</fullName>
    </alternativeName>
</protein>
<evidence type="ECO:0000250" key="1"/>
<evidence type="ECO:0000250" key="2">
    <source>
        <dbReference type="UniProtKB" id="O89093"/>
    </source>
</evidence>
<evidence type="ECO:0000250" key="3">
    <source>
        <dbReference type="UniProtKB" id="P78556"/>
    </source>
</evidence>
<evidence type="ECO:0000305" key="4"/>
<organism>
    <name type="scientific">Bos taurus</name>
    <name type="common">Bovine</name>
    <dbReference type="NCBI Taxonomy" id="9913"/>
    <lineage>
        <taxon>Eukaryota</taxon>
        <taxon>Metazoa</taxon>
        <taxon>Chordata</taxon>
        <taxon>Craniata</taxon>
        <taxon>Vertebrata</taxon>
        <taxon>Euteleostomi</taxon>
        <taxon>Mammalia</taxon>
        <taxon>Eutheria</taxon>
        <taxon>Laurasiatheria</taxon>
        <taxon>Artiodactyla</taxon>
        <taxon>Ruminantia</taxon>
        <taxon>Pecora</taxon>
        <taxon>Bovidae</taxon>
        <taxon>Bovinae</taxon>
        <taxon>Bos</taxon>
    </lineage>
</organism>
<name>CCL20_BOVIN</name>
<proteinExistence type="inferred from homology"/>
<sequence>MMCSSKNLLLAALMSVLLLHFCSKSEASNFDCCLRYTERILHPSILVGFTQQLANEACDINAVVFYTRKKLAVCADPKKKWVKQVVHMLSQRVKRM</sequence>
<accession>Q8SQB1</accession>
<feature type="signal peptide" evidence="1">
    <location>
        <begin position="1"/>
        <end position="26"/>
    </location>
</feature>
<feature type="chain" id="PRO_0000005216" description="C-C motif chemokine 20">
    <location>
        <begin position="27"/>
        <end position="96"/>
    </location>
</feature>
<feature type="disulfide bond" evidence="1">
    <location>
        <begin position="32"/>
        <end position="58"/>
    </location>
</feature>
<feature type="disulfide bond" evidence="1">
    <location>
        <begin position="33"/>
        <end position="74"/>
    </location>
</feature>
<dbReference type="EMBL" id="AY061959">
    <property type="protein sequence ID" value="AAL38662.1"/>
    <property type="molecule type" value="mRNA"/>
</dbReference>
<dbReference type="RefSeq" id="NP_776688.1">
    <property type="nucleotide sequence ID" value="NM_174263.2"/>
</dbReference>
<dbReference type="SMR" id="Q8SQB1"/>
<dbReference type="FunCoup" id="Q8SQB1">
    <property type="interactions" value="427"/>
</dbReference>
<dbReference type="STRING" id="9913.ENSBTAP00000028430"/>
<dbReference type="PaxDb" id="9913-ENSBTAP00000028430"/>
<dbReference type="GeneID" id="281666"/>
<dbReference type="KEGG" id="bta:281666"/>
<dbReference type="CTD" id="6364"/>
<dbReference type="VEuPathDB" id="HostDB:ENSBTAG00000021326"/>
<dbReference type="eggNOG" id="ENOG502S776">
    <property type="taxonomic scope" value="Eukaryota"/>
</dbReference>
<dbReference type="HOGENOM" id="CLU_141716_3_3_1"/>
<dbReference type="InParanoid" id="Q8SQB1"/>
<dbReference type="OMA" id="NWVKQAV"/>
<dbReference type="OrthoDB" id="8870994at2759"/>
<dbReference type="TreeFam" id="TF334888"/>
<dbReference type="Reactome" id="R-BTA-380108">
    <property type="pathway name" value="Chemokine receptors bind chemokines"/>
</dbReference>
<dbReference type="Reactome" id="R-BTA-418594">
    <property type="pathway name" value="G alpha (i) signalling events"/>
</dbReference>
<dbReference type="Proteomes" id="UP000009136">
    <property type="component" value="Chromosome 2"/>
</dbReference>
<dbReference type="Bgee" id="ENSBTAG00000021326">
    <property type="expression patterns" value="Expressed in pharyngeal tonsil and 50 other cell types or tissues"/>
</dbReference>
<dbReference type="GO" id="GO:0005615">
    <property type="term" value="C:extracellular space"/>
    <property type="evidence" value="ECO:0007669"/>
    <property type="project" value="UniProtKB-KW"/>
</dbReference>
<dbReference type="GO" id="GO:0031731">
    <property type="term" value="F:CCR6 chemokine receptor binding"/>
    <property type="evidence" value="ECO:0000250"/>
    <property type="project" value="UniProtKB"/>
</dbReference>
<dbReference type="GO" id="GO:0008009">
    <property type="term" value="F:chemokine activity"/>
    <property type="evidence" value="ECO:0007669"/>
    <property type="project" value="InterPro"/>
</dbReference>
<dbReference type="GO" id="GO:0019722">
    <property type="term" value="P:calcium-mediated signaling"/>
    <property type="evidence" value="ECO:0000250"/>
    <property type="project" value="UniProtKB"/>
</dbReference>
<dbReference type="GO" id="GO:0060326">
    <property type="term" value="P:cell chemotaxis"/>
    <property type="evidence" value="ECO:0000250"/>
    <property type="project" value="UniProtKB"/>
</dbReference>
<dbReference type="GO" id="GO:0006935">
    <property type="term" value="P:chemotaxis"/>
    <property type="evidence" value="ECO:0000250"/>
    <property type="project" value="UniProtKB"/>
</dbReference>
<dbReference type="GO" id="GO:0006955">
    <property type="term" value="P:immune response"/>
    <property type="evidence" value="ECO:0007669"/>
    <property type="project" value="InterPro"/>
</dbReference>
<dbReference type="GO" id="GO:0006954">
    <property type="term" value="P:inflammatory response"/>
    <property type="evidence" value="ECO:0007669"/>
    <property type="project" value="UniProtKB-KW"/>
</dbReference>
<dbReference type="GO" id="GO:0072678">
    <property type="term" value="P:T cell migration"/>
    <property type="evidence" value="ECO:0000250"/>
    <property type="project" value="UniProtKB"/>
</dbReference>
<dbReference type="GO" id="GO:0072679">
    <property type="term" value="P:thymocyte migration"/>
    <property type="evidence" value="ECO:0000250"/>
    <property type="project" value="UniProtKB"/>
</dbReference>
<dbReference type="FunFam" id="2.40.50.40:FF:000012">
    <property type="entry name" value="C-C motif chemokine"/>
    <property type="match status" value="1"/>
</dbReference>
<dbReference type="Gene3D" id="2.40.50.40">
    <property type="match status" value="1"/>
</dbReference>
<dbReference type="InterPro" id="IPR039809">
    <property type="entry name" value="Chemokine_b/g/d"/>
</dbReference>
<dbReference type="InterPro" id="IPR000827">
    <property type="entry name" value="Chemokine_CC_CS"/>
</dbReference>
<dbReference type="InterPro" id="IPR001811">
    <property type="entry name" value="Chemokine_IL8-like_dom"/>
</dbReference>
<dbReference type="InterPro" id="IPR036048">
    <property type="entry name" value="Interleukin_8-like_sf"/>
</dbReference>
<dbReference type="PANTHER" id="PTHR12015:SF108">
    <property type="entry name" value="C-C MOTIF CHEMOKINE 20"/>
    <property type="match status" value="1"/>
</dbReference>
<dbReference type="PANTHER" id="PTHR12015">
    <property type="entry name" value="SMALL INDUCIBLE CYTOKINE A"/>
    <property type="match status" value="1"/>
</dbReference>
<dbReference type="Pfam" id="PF00048">
    <property type="entry name" value="IL8"/>
    <property type="match status" value="1"/>
</dbReference>
<dbReference type="SMART" id="SM00199">
    <property type="entry name" value="SCY"/>
    <property type="match status" value="1"/>
</dbReference>
<dbReference type="SUPFAM" id="SSF54117">
    <property type="entry name" value="Interleukin 8-like chemokines"/>
    <property type="match status" value="1"/>
</dbReference>
<dbReference type="PROSITE" id="PS00472">
    <property type="entry name" value="SMALL_CYTOKINES_CC"/>
    <property type="match status" value="1"/>
</dbReference>
<keyword id="KW-0145">Chemotaxis</keyword>
<keyword id="KW-0202">Cytokine</keyword>
<keyword id="KW-1015">Disulfide bond</keyword>
<keyword id="KW-0395">Inflammatory response</keyword>
<keyword id="KW-1185">Reference proteome</keyword>
<keyword id="KW-0964">Secreted</keyword>
<keyword id="KW-0732">Signal</keyword>